<name>ECOT_YERPA</name>
<evidence type="ECO:0000255" key="1">
    <source>
        <dbReference type="HAMAP-Rule" id="MF_00706"/>
    </source>
</evidence>
<protein>
    <recommendedName>
        <fullName evidence="1">Ecotin</fullName>
    </recommendedName>
</protein>
<comment type="function">
    <text evidence="1">General inhibitor of pancreatic serine proteases: inhibits chymotrypsin, trypsin, elastases, factor X, kallikrein as well as a variety of other proteases.</text>
</comment>
<comment type="subunit">
    <text evidence="1">Homodimer.</text>
</comment>
<comment type="subcellular location">
    <subcellularLocation>
        <location evidence="1">Periplasm</location>
    </subcellularLocation>
</comment>
<comment type="similarity">
    <text evidence="1">Belongs to the protease inhibitor I11 (ecotin) family.</text>
</comment>
<accession>Q1C9H9</accession>
<gene>
    <name evidence="1" type="primary">eco</name>
    <name type="ordered locus">YPA_0925</name>
</gene>
<sequence>MKKCSIILASVLLATSINAIADTPTPLNQQQPLEKIAPYPQAEKGMSRQVIFLEPQKDESRFKVELLIGKTLNVDCNRHMLGGNLETRTLSGWGFDYLVMDKISQPASTMMACPEDSKPQVKFVTANLGDAAMQRYNSRLPIVVYVPQGVEVKYRIWEAGEDIRSAQVK</sequence>
<dbReference type="EMBL" id="CP000308">
    <property type="protein sequence ID" value="ABG12893.1"/>
    <property type="molecule type" value="Genomic_DNA"/>
</dbReference>
<dbReference type="RefSeq" id="WP_002210815.1">
    <property type="nucleotide sequence ID" value="NZ_CP009906.1"/>
</dbReference>
<dbReference type="SMR" id="Q1C9H9"/>
<dbReference type="MEROPS" id="I11.001"/>
<dbReference type="GeneID" id="57977350"/>
<dbReference type="KEGG" id="ypa:YPA_0925"/>
<dbReference type="Proteomes" id="UP000001971">
    <property type="component" value="Chromosome"/>
</dbReference>
<dbReference type="GO" id="GO:0042597">
    <property type="term" value="C:periplasmic space"/>
    <property type="evidence" value="ECO:0007669"/>
    <property type="project" value="UniProtKB-SubCell"/>
</dbReference>
<dbReference type="GO" id="GO:0004867">
    <property type="term" value="F:serine-type endopeptidase inhibitor activity"/>
    <property type="evidence" value="ECO:0007669"/>
    <property type="project" value="UniProtKB-UniRule"/>
</dbReference>
<dbReference type="CDD" id="cd00242">
    <property type="entry name" value="Ecotin"/>
    <property type="match status" value="1"/>
</dbReference>
<dbReference type="Gene3D" id="2.60.40.550">
    <property type="entry name" value="Ecotin"/>
    <property type="match status" value="1"/>
</dbReference>
<dbReference type="HAMAP" id="MF_00706">
    <property type="entry name" value="Ecotin"/>
    <property type="match status" value="1"/>
</dbReference>
<dbReference type="InterPro" id="IPR036198">
    <property type="entry name" value="Ecotin_sf"/>
</dbReference>
<dbReference type="InterPro" id="IPR005658">
    <property type="entry name" value="Prot_inh_ecotin"/>
</dbReference>
<dbReference type="InterPro" id="IPR023084">
    <property type="entry name" value="Prot_inh_ecotin_gammaproteobac"/>
</dbReference>
<dbReference type="NCBIfam" id="NF002987">
    <property type="entry name" value="PRK03719.1"/>
    <property type="match status" value="1"/>
</dbReference>
<dbReference type="PANTHER" id="PTHR35890">
    <property type="match status" value="1"/>
</dbReference>
<dbReference type="PANTHER" id="PTHR35890:SF3">
    <property type="entry name" value="ECOTIN"/>
    <property type="match status" value="1"/>
</dbReference>
<dbReference type="Pfam" id="PF03974">
    <property type="entry name" value="Ecotin"/>
    <property type="match status" value="1"/>
</dbReference>
<dbReference type="PIRSF" id="PIRSF006865">
    <property type="entry name" value="Prot_inh_ecotin"/>
    <property type="match status" value="1"/>
</dbReference>
<dbReference type="SUPFAM" id="SSF49772">
    <property type="entry name" value="Ecotin, trypsin inhibitor"/>
    <property type="match status" value="1"/>
</dbReference>
<proteinExistence type="inferred from homology"/>
<keyword id="KW-1015">Disulfide bond</keyword>
<keyword id="KW-0574">Periplasm</keyword>
<keyword id="KW-0646">Protease inhibitor</keyword>
<keyword id="KW-0722">Serine protease inhibitor</keyword>
<keyword id="KW-0732">Signal</keyword>
<organism>
    <name type="scientific">Yersinia pestis bv. Antiqua (strain Antiqua)</name>
    <dbReference type="NCBI Taxonomy" id="360102"/>
    <lineage>
        <taxon>Bacteria</taxon>
        <taxon>Pseudomonadati</taxon>
        <taxon>Pseudomonadota</taxon>
        <taxon>Gammaproteobacteria</taxon>
        <taxon>Enterobacterales</taxon>
        <taxon>Yersiniaceae</taxon>
        <taxon>Yersinia</taxon>
    </lineage>
</organism>
<reference key="1">
    <citation type="journal article" date="2006" name="J. Bacteriol.">
        <title>Complete genome sequence of Yersinia pestis strains Antiqua and Nepal516: evidence of gene reduction in an emerging pathogen.</title>
        <authorList>
            <person name="Chain P.S.G."/>
            <person name="Hu P."/>
            <person name="Malfatti S.A."/>
            <person name="Radnedge L."/>
            <person name="Larimer F."/>
            <person name="Vergez L.M."/>
            <person name="Worsham P."/>
            <person name="Chu M.C."/>
            <person name="Andersen G.L."/>
        </authorList>
    </citation>
    <scope>NUCLEOTIDE SEQUENCE [LARGE SCALE GENOMIC DNA]</scope>
    <source>
        <strain>Antiqua</strain>
    </source>
</reference>
<feature type="signal peptide" evidence="1">
    <location>
        <begin position="1"/>
        <end position="21"/>
    </location>
</feature>
<feature type="chain" id="PRO_5000115862" description="Ecotin">
    <location>
        <begin position="22"/>
        <end position="169"/>
    </location>
</feature>
<feature type="site" description="Reactive bond" evidence="1">
    <location>
        <begin position="110"/>
        <end position="111"/>
    </location>
</feature>
<feature type="disulfide bond" evidence="1">
    <location>
        <begin position="76"/>
        <end position="113"/>
    </location>
</feature>